<feature type="chain" id="PRO_1000129893" description="Protein Smg homolog">
    <location>
        <begin position="1"/>
        <end position="158"/>
    </location>
</feature>
<sequence length="158" mass="17671">MFDVLVYLYETYYRPDACPDSEALVKKLSAVGFEEEEITKALGWLTALAETTNELSDSYPHQTAFSFGTRIYVSQETDVLGTPAVGFIQFLEAAKLINPIQREIVIERALAAGETPISLEKLKVIVLMVLWSQGKEPDGLIFDELFLDDDDAAPRILH</sequence>
<evidence type="ECO:0000255" key="1">
    <source>
        <dbReference type="HAMAP-Rule" id="MF_00598"/>
    </source>
</evidence>
<gene>
    <name evidence="1" type="primary">smg</name>
    <name type="ordered locus">HEAR0115</name>
</gene>
<keyword id="KW-1185">Reference proteome</keyword>
<accession>A4G1G4</accession>
<organism>
    <name type="scientific">Herminiimonas arsenicoxydans</name>
    <dbReference type="NCBI Taxonomy" id="204773"/>
    <lineage>
        <taxon>Bacteria</taxon>
        <taxon>Pseudomonadati</taxon>
        <taxon>Pseudomonadota</taxon>
        <taxon>Betaproteobacteria</taxon>
        <taxon>Burkholderiales</taxon>
        <taxon>Oxalobacteraceae</taxon>
        <taxon>Herminiimonas</taxon>
    </lineage>
</organism>
<reference key="1">
    <citation type="journal article" date="2007" name="PLoS Genet.">
        <title>A tale of two oxidation states: bacterial colonization of arsenic-rich environments.</title>
        <authorList>
            <person name="Muller D."/>
            <person name="Medigue C."/>
            <person name="Koechler S."/>
            <person name="Barbe V."/>
            <person name="Barakat M."/>
            <person name="Talla E."/>
            <person name="Bonnefoy V."/>
            <person name="Krin E."/>
            <person name="Arsene-Ploetze F."/>
            <person name="Carapito C."/>
            <person name="Chandler M."/>
            <person name="Cournoyer B."/>
            <person name="Cruveiller S."/>
            <person name="Dossat C."/>
            <person name="Duval S."/>
            <person name="Heymann M."/>
            <person name="Leize E."/>
            <person name="Lieutaud A."/>
            <person name="Lievremont D."/>
            <person name="Makita Y."/>
            <person name="Mangenot S."/>
            <person name="Nitschke W."/>
            <person name="Ortet P."/>
            <person name="Perdrial N."/>
            <person name="Schoepp B."/>
            <person name="Siguier P."/>
            <person name="Simeonova D.D."/>
            <person name="Rouy Z."/>
            <person name="Segurens B."/>
            <person name="Turlin E."/>
            <person name="Vallenet D."/>
            <person name="van Dorsselaer A."/>
            <person name="Weiss S."/>
            <person name="Weissenbach J."/>
            <person name="Lett M.-C."/>
            <person name="Danchin A."/>
            <person name="Bertin P.N."/>
        </authorList>
    </citation>
    <scope>NUCLEOTIDE SEQUENCE [LARGE SCALE GENOMIC DNA]</scope>
    <source>
        <strain>ULPAs1</strain>
    </source>
</reference>
<comment type="similarity">
    <text evidence="1">Belongs to the Smg family.</text>
</comment>
<protein>
    <recommendedName>
        <fullName evidence="1">Protein Smg homolog</fullName>
    </recommendedName>
</protein>
<name>SMG_HERAR</name>
<dbReference type="EMBL" id="CU207211">
    <property type="protein sequence ID" value="CAL60351.2"/>
    <property type="molecule type" value="Genomic_DNA"/>
</dbReference>
<dbReference type="SMR" id="A4G1G4"/>
<dbReference type="STRING" id="204773.HEAR0115"/>
<dbReference type="KEGG" id="har:HEAR0115"/>
<dbReference type="eggNOG" id="COG2922">
    <property type="taxonomic scope" value="Bacteria"/>
</dbReference>
<dbReference type="HOGENOM" id="CLU_133242_0_0_4"/>
<dbReference type="OrthoDB" id="5297467at2"/>
<dbReference type="Proteomes" id="UP000006697">
    <property type="component" value="Chromosome"/>
</dbReference>
<dbReference type="HAMAP" id="MF_00598">
    <property type="entry name" value="Smg"/>
    <property type="match status" value="1"/>
</dbReference>
<dbReference type="InterPro" id="IPR007456">
    <property type="entry name" value="Smg"/>
</dbReference>
<dbReference type="PANTHER" id="PTHR38692">
    <property type="entry name" value="PROTEIN SMG"/>
    <property type="match status" value="1"/>
</dbReference>
<dbReference type="PANTHER" id="PTHR38692:SF1">
    <property type="entry name" value="PROTEIN SMG"/>
    <property type="match status" value="1"/>
</dbReference>
<dbReference type="Pfam" id="PF04361">
    <property type="entry name" value="DUF494"/>
    <property type="match status" value="1"/>
</dbReference>
<proteinExistence type="inferred from homology"/>